<name>FMT_BORDL</name>
<proteinExistence type="inferred from homology"/>
<organism>
    <name type="scientific">Borrelia duttonii (strain Ly)</name>
    <dbReference type="NCBI Taxonomy" id="412419"/>
    <lineage>
        <taxon>Bacteria</taxon>
        <taxon>Pseudomonadati</taxon>
        <taxon>Spirochaetota</taxon>
        <taxon>Spirochaetia</taxon>
        <taxon>Spirochaetales</taxon>
        <taxon>Borreliaceae</taxon>
        <taxon>Borrelia</taxon>
    </lineage>
</organism>
<gene>
    <name evidence="1" type="primary">fmt</name>
    <name type="ordered locus">BDU_68</name>
</gene>
<feature type="chain" id="PRO_1000098378" description="Methionyl-tRNA formyltransferase">
    <location>
        <begin position="1"/>
        <end position="309"/>
    </location>
</feature>
<feature type="binding site" evidence="1">
    <location>
        <begin position="107"/>
        <end position="110"/>
    </location>
    <ligand>
        <name>(6S)-5,6,7,8-tetrahydrofolate</name>
        <dbReference type="ChEBI" id="CHEBI:57453"/>
    </ligand>
</feature>
<evidence type="ECO:0000255" key="1">
    <source>
        <dbReference type="HAMAP-Rule" id="MF_00182"/>
    </source>
</evidence>
<keyword id="KW-0648">Protein biosynthesis</keyword>
<keyword id="KW-0808">Transferase</keyword>
<reference key="1">
    <citation type="journal article" date="2008" name="PLoS Genet.">
        <title>The genome of Borrelia recurrentis, the agent of deadly louse-borne relapsing fever, is a degraded subset of tick-borne Borrelia duttonii.</title>
        <authorList>
            <person name="Lescot M."/>
            <person name="Audic S."/>
            <person name="Robert C."/>
            <person name="Nguyen T.T."/>
            <person name="Blanc G."/>
            <person name="Cutler S.J."/>
            <person name="Wincker P."/>
            <person name="Couloux A."/>
            <person name="Claverie J.-M."/>
            <person name="Raoult D."/>
            <person name="Drancourt M."/>
        </authorList>
    </citation>
    <scope>NUCLEOTIDE SEQUENCE [LARGE SCALE GENOMIC DNA]</scope>
    <source>
        <strain>Ly</strain>
    </source>
</reference>
<protein>
    <recommendedName>
        <fullName evidence="1">Methionyl-tRNA formyltransferase</fullName>
        <ecNumber evidence="1">2.1.2.9</ecNumber>
    </recommendedName>
</protein>
<sequence>MRIFFASSDVIALEVLKKISDQYDVVGVLTAPDKPSGRGLSLKVNDIKREALSRKITVLQPVVLDADVINLVKSLEPELMLVFSYGKIFKQEFLDIFPVGCINIHPSLLPKYRGPSPIQTAILNGDSISGITVQKMTLEMDSGNILAQSQFEIKSFNTSVDIFEYVSLNSFDLVIEALNKLLKGDIGIVQDKNNATYCSFLGKEHRTIDFKLSAFDIKNKINAYNPWPLARARLDNNEIIFHRADFISTNDYDDQVIGKIIAFDPSKGLLVKTGDGILVVLELQRIGKKVLDCVSFYHGNRDLIGKVFS</sequence>
<comment type="function">
    <text evidence="1">Attaches a formyl group to the free amino group of methionyl-tRNA(fMet). The formyl group appears to play a dual role in the initiator identity of N-formylmethionyl-tRNA by promoting its recognition by IF2 and preventing the misappropriation of this tRNA by the elongation apparatus.</text>
</comment>
<comment type="catalytic activity">
    <reaction evidence="1">
        <text>L-methionyl-tRNA(fMet) + (6R)-10-formyltetrahydrofolate = N-formyl-L-methionyl-tRNA(fMet) + (6S)-5,6,7,8-tetrahydrofolate + H(+)</text>
        <dbReference type="Rhea" id="RHEA:24380"/>
        <dbReference type="Rhea" id="RHEA-COMP:9952"/>
        <dbReference type="Rhea" id="RHEA-COMP:9953"/>
        <dbReference type="ChEBI" id="CHEBI:15378"/>
        <dbReference type="ChEBI" id="CHEBI:57453"/>
        <dbReference type="ChEBI" id="CHEBI:78530"/>
        <dbReference type="ChEBI" id="CHEBI:78844"/>
        <dbReference type="ChEBI" id="CHEBI:195366"/>
        <dbReference type="EC" id="2.1.2.9"/>
    </reaction>
</comment>
<comment type="similarity">
    <text evidence="1">Belongs to the Fmt family.</text>
</comment>
<accession>B5RKW3</accession>
<dbReference type="EC" id="2.1.2.9" evidence="1"/>
<dbReference type="EMBL" id="CP000976">
    <property type="protein sequence ID" value="ACH93024.1"/>
    <property type="molecule type" value="Genomic_DNA"/>
</dbReference>
<dbReference type="RefSeq" id="WP_012537836.1">
    <property type="nucleotide sequence ID" value="NC_011229.1"/>
</dbReference>
<dbReference type="SMR" id="B5RKW3"/>
<dbReference type="STRING" id="412419.BDU_68"/>
<dbReference type="KEGG" id="bdu:BDU_68"/>
<dbReference type="eggNOG" id="COG0223">
    <property type="taxonomic scope" value="Bacteria"/>
</dbReference>
<dbReference type="HOGENOM" id="CLU_033347_1_1_12"/>
<dbReference type="OrthoDB" id="9802815at2"/>
<dbReference type="Proteomes" id="UP000000611">
    <property type="component" value="Chromosome"/>
</dbReference>
<dbReference type="GO" id="GO:0005829">
    <property type="term" value="C:cytosol"/>
    <property type="evidence" value="ECO:0007669"/>
    <property type="project" value="TreeGrafter"/>
</dbReference>
<dbReference type="GO" id="GO:0004479">
    <property type="term" value="F:methionyl-tRNA formyltransferase activity"/>
    <property type="evidence" value="ECO:0007669"/>
    <property type="project" value="UniProtKB-UniRule"/>
</dbReference>
<dbReference type="CDD" id="cd08646">
    <property type="entry name" value="FMT_core_Met-tRNA-FMT_N"/>
    <property type="match status" value="1"/>
</dbReference>
<dbReference type="CDD" id="cd08704">
    <property type="entry name" value="Met_tRNA_FMT_C"/>
    <property type="match status" value="1"/>
</dbReference>
<dbReference type="Gene3D" id="3.10.25.10">
    <property type="entry name" value="Formyl transferase, C-terminal domain"/>
    <property type="match status" value="1"/>
</dbReference>
<dbReference type="Gene3D" id="3.40.50.170">
    <property type="entry name" value="Formyl transferase, N-terminal domain"/>
    <property type="match status" value="1"/>
</dbReference>
<dbReference type="HAMAP" id="MF_00182">
    <property type="entry name" value="Formyl_trans"/>
    <property type="match status" value="1"/>
</dbReference>
<dbReference type="InterPro" id="IPR005794">
    <property type="entry name" value="Fmt"/>
</dbReference>
<dbReference type="InterPro" id="IPR005793">
    <property type="entry name" value="Formyl_trans_C"/>
</dbReference>
<dbReference type="InterPro" id="IPR037022">
    <property type="entry name" value="Formyl_trans_C_sf"/>
</dbReference>
<dbReference type="InterPro" id="IPR002376">
    <property type="entry name" value="Formyl_transf_N"/>
</dbReference>
<dbReference type="InterPro" id="IPR036477">
    <property type="entry name" value="Formyl_transf_N_sf"/>
</dbReference>
<dbReference type="InterPro" id="IPR011034">
    <property type="entry name" value="Formyl_transferase-like_C_sf"/>
</dbReference>
<dbReference type="InterPro" id="IPR044135">
    <property type="entry name" value="Met-tRNA-FMT_C"/>
</dbReference>
<dbReference type="InterPro" id="IPR041711">
    <property type="entry name" value="Met-tRNA-FMT_N"/>
</dbReference>
<dbReference type="NCBIfam" id="TIGR00460">
    <property type="entry name" value="fmt"/>
    <property type="match status" value="1"/>
</dbReference>
<dbReference type="PANTHER" id="PTHR11138">
    <property type="entry name" value="METHIONYL-TRNA FORMYLTRANSFERASE"/>
    <property type="match status" value="1"/>
</dbReference>
<dbReference type="PANTHER" id="PTHR11138:SF5">
    <property type="entry name" value="METHIONYL-TRNA FORMYLTRANSFERASE, MITOCHONDRIAL"/>
    <property type="match status" value="1"/>
</dbReference>
<dbReference type="Pfam" id="PF02911">
    <property type="entry name" value="Formyl_trans_C"/>
    <property type="match status" value="1"/>
</dbReference>
<dbReference type="Pfam" id="PF00551">
    <property type="entry name" value="Formyl_trans_N"/>
    <property type="match status" value="1"/>
</dbReference>
<dbReference type="SUPFAM" id="SSF50486">
    <property type="entry name" value="FMT C-terminal domain-like"/>
    <property type="match status" value="1"/>
</dbReference>
<dbReference type="SUPFAM" id="SSF53328">
    <property type="entry name" value="Formyltransferase"/>
    <property type="match status" value="1"/>
</dbReference>